<accession>Q6YTW6</accession>
<accession>A0A0P0X8P5</accession>
<accession>Q94LM4</accession>
<sequence>MSHVRSAPAGKSGGGGGSTPAKRGRPFGSTTGSGAAAAAAAAAIGDAAAPAALVGPSLQVLTALSDQNNKRIVLALQSGLKSEILWALNALTVLSFKEKDDLRRDTTPLAKVPGLLDALLQVIDDWRDIAMPKDHTKPPRVRTLGVNTTLSGFGHENVEKVYSDTTTPSDDQTKTADSTVTKKRSAGFLFDEEGLFNVDDEGRTEKQQCAVAASNIIRNFSFMPENETVMVQHRHCLETVFQCLEDQNTEDDELITNMLETLVNLAPVLDLRIFSSSKPSFIKITEKRAVQAIMGMLASSIRVWHCAAAELIGRLIINPDNEPFLLPAIPQIYKRLVDLLSVPAVDAQAAAISALYNVAEVNMDFRLKLASERWAVDRLLKVVKTPHPVPEVCRKASMIVESLVSEPQNRMHLLVHENTFAEILTSEGKYSDTFARILYELTARPSNKVTAGQAIWGNIN</sequence>
<dbReference type="EMBL" id="AC079038">
    <property type="protein sequence ID" value="AAK55772.1"/>
    <property type="molecule type" value="Genomic_DNA"/>
</dbReference>
<dbReference type="EMBL" id="AP005895">
    <property type="protein sequence ID" value="BAC84651.1"/>
    <property type="molecule type" value="Genomic_DNA"/>
</dbReference>
<dbReference type="EMBL" id="AP008213">
    <property type="protein sequence ID" value="BAH94023.1"/>
    <property type="molecule type" value="Genomic_DNA"/>
</dbReference>
<dbReference type="EMBL" id="AP014963">
    <property type="protein sequence ID" value="BAT02600.1"/>
    <property type="status" value="ALT_SEQ"/>
    <property type="molecule type" value="Genomic_DNA"/>
</dbReference>
<dbReference type="SMR" id="Q6YTW6"/>
<dbReference type="FunCoup" id="Q6YTW6">
    <property type="interactions" value="1947"/>
</dbReference>
<dbReference type="STRING" id="39947.A0A0P0X8P5"/>
<dbReference type="PaxDb" id="39947-A0A0P0X8P5"/>
<dbReference type="EnsemblPlants" id="Os07t0609766-01">
    <property type="protein sequence ID" value="Os07t0609766-01"/>
    <property type="gene ID" value="Os07g0609766"/>
</dbReference>
<dbReference type="Gramene" id="Os07t0609766-01">
    <property type="protein sequence ID" value="Os07t0609766-01"/>
    <property type="gene ID" value="Os07g0609766"/>
</dbReference>
<dbReference type="KEGG" id="dosa:Os07g0609766"/>
<dbReference type="KEGG" id="osa:9271563"/>
<dbReference type="eggNOG" id="ENOG502QU15">
    <property type="taxonomic scope" value="Eukaryota"/>
</dbReference>
<dbReference type="InParanoid" id="Q6YTW6"/>
<dbReference type="OrthoDB" id="10044343at2759"/>
<dbReference type="Proteomes" id="UP000000763">
    <property type="component" value="Chromosome 7"/>
</dbReference>
<dbReference type="Proteomes" id="UP000059680">
    <property type="component" value="Chromosome 7"/>
</dbReference>
<dbReference type="GO" id="GO:0035060">
    <property type="term" value="C:brahma complex"/>
    <property type="evidence" value="ECO:0007669"/>
    <property type="project" value="InterPro"/>
</dbReference>
<dbReference type="GO" id="GO:0005654">
    <property type="term" value="C:nucleoplasm"/>
    <property type="evidence" value="ECO:0000318"/>
    <property type="project" value="GO_Central"/>
</dbReference>
<dbReference type="GO" id="GO:0005634">
    <property type="term" value="C:nucleus"/>
    <property type="evidence" value="ECO:0000314"/>
    <property type="project" value="UniProtKB"/>
</dbReference>
<dbReference type="GO" id="GO:0016514">
    <property type="term" value="C:SWI/SNF complex"/>
    <property type="evidence" value="ECO:0000318"/>
    <property type="project" value="GO_Central"/>
</dbReference>
<dbReference type="GO" id="GO:0048653">
    <property type="term" value="P:anther development"/>
    <property type="evidence" value="ECO:0007669"/>
    <property type="project" value="EnsemblPlants"/>
</dbReference>
<dbReference type="GO" id="GO:0006338">
    <property type="term" value="P:chromatin remodeling"/>
    <property type="evidence" value="ECO:0007669"/>
    <property type="project" value="InterPro"/>
</dbReference>
<dbReference type="GO" id="GO:0009793">
    <property type="term" value="P:embryo development ending in seed dormancy"/>
    <property type="evidence" value="ECO:0000315"/>
    <property type="project" value="UniProtKB"/>
</dbReference>
<dbReference type="GO" id="GO:0048366">
    <property type="term" value="P:leaf development"/>
    <property type="evidence" value="ECO:0007669"/>
    <property type="project" value="EnsemblPlants"/>
</dbReference>
<dbReference type="GO" id="GO:0045893">
    <property type="term" value="P:positive regulation of DNA-templated transcription"/>
    <property type="evidence" value="ECO:0000318"/>
    <property type="project" value="GO_Central"/>
</dbReference>
<dbReference type="GO" id="GO:2000014">
    <property type="term" value="P:regulation of endosperm development"/>
    <property type="evidence" value="ECO:0000315"/>
    <property type="project" value="UniProtKB"/>
</dbReference>
<dbReference type="GO" id="GO:0051783">
    <property type="term" value="P:regulation of nuclear division"/>
    <property type="evidence" value="ECO:0000315"/>
    <property type="project" value="UniProtKB"/>
</dbReference>
<dbReference type="GO" id="GO:0006357">
    <property type="term" value="P:regulation of transcription by RNA polymerase II"/>
    <property type="evidence" value="ECO:0000318"/>
    <property type="project" value="GO_Central"/>
</dbReference>
<dbReference type="Gene3D" id="1.25.10.10">
    <property type="entry name" value="Leucine-rich Repeat Variant"/>
    <property type="match status" value="1"/>
</dbReference>
<dbReference type="InterPro" id="IPR011989">
    <property type="entry name" value="ARM-like"/>
</dbReference>
<dbReference type="InterPro" id="IPR016024">
    <property type="entry name" value="ARM-type_fold"/>
</dbReference>
<dbReference type="InterPro" id="IPR021906">
    <property type="entry name" value="BAF250/Osa"/>
</dbReference>
<dbReference type="InterPro" id="IPR033388">
    <property type="entry name" value="BAF250_C"/>
</dbReference>
<dbReference type="PANTHER" id="PTHR12656">
    <property type="entry name" value="BRG-1 ASSOCIATED FACTOR 250 BAF250"/>
    <property type="match status" value="1"/>
</dbReference>
<dbReference type="PANTHER" id="PTHR12656:SF5">
    <property type="entry name" value="TRITHORAX GROUP PROTEIN OSA"/>
    <property type="match status" value="1"/>
</dbReference>
<dbReference type="Pfam" id="PF12031">
    <property type="entry name" value="BAF250_C"/>
    <property type="match status" value="1"/>
</dbReference>
<dbReference type="SUPFAM" id="SSF48371">
    <property type="entry name" value="ARM repeat"/>
    <property type="match status" value="1"/>
</dbReference>
<organism>
    <name type="scientific">Oryza sativa subsp. japonica</name>
    <name type="common">Rice</name>
    <dbReference type="NCBI Taxonomy" id="39947"/>
    <lineage>
        <taxon>Eukaryota</taxon>
        <taxon>Viridiplantae</taxon>
        <taxon>Streptophyta</taxon>
        <taxon>Embryophyta</taxon>
        <taxon>Tracheophyta</taxon>
        <taxon>Spermatophyta</taxon>
        <taxon>Magnoliopsida</taxon>
        <taxon>Liliopsida</taxon>
        <taxon>Poales</taxon>
        <taxon>Poaceae</taxon>
        <taxon>BOP clade</taxon>
        <taxon>Oryzoideae</taxon>
        <taxon>Oryzeae</taxon>
        <taxon>Oryzinae</taxon>
        <taxon>Oryza</taxon>
        <taxon>Oryza sativa</taxon>
    </lineage>
</organism>
<evidence type="ECO:0000255" key="1"/>
<evidence type="ECO:0000256" key="2">
    <source>
        <dbReference type="SAM" id="MobiDB-lite"/>
    </source>
</evidence>
<evidence type="ECO:0000269" key="3">
    <source>
    </source>
</evidence>
<evidence type="ECO:0000303" key="4">
    <source>
    </source>
</evidence>
<evidence type="ECO:0000305" key="5"/>
<evidence type="ECO:0000312" key="6">
    <source>
        <dbReference type="EMBL" id="BAC84651.1"/>
    </source>
</evidence>
<evidence type="ECO:0000312" key="7">
    <source>
        <dbReference type="EMBL" id="BAH94023.1"/>
    </source>
</evidence>
<comment type="function">
    <text evidence="3">Plays critical roles in both embryo and endosperm development (PubMed:32808364). Required for free nuclei division and cellularization in early endosperm development, by preventing premature cell death in the endosperm (PubMed:32808364). Involved in the regulation of pattern formation and organ differentiation during embryogenesis, by regulating genes involved in the early stages of seed development (PubMed:32808364).</text>
</comment>
<comment type="subunit">
    <text evidence="3">Interacts with CHR719, SWI3A and SWI3C.</text>
</comment>
<comment type="subcellular location">
    <subcellularLocation>
        <location evidence="3">Nucleus</location>
    </subcellularLocation>
</comment>
<comment type="tissue specificity">
    <text evidence="3">Expressed at low levels in coleoptiles, leaf tongues, mature leaves and nodes during the vegetative phase (PubMed:32808364). Highly expressed in reproductive tissues such as young panicles, early developing seeds, embryos and endosperms (PubMed:32808364).</text>
</comment>
<comment type="disruption phenotype">
    <text evidence="3">Embryonic lethality when homozygous due to defects in endosperm and embryo.</text>
</comment>
<comment type="sequence caution" evidence="5">
    <conflict type="erroneous gene model prediction">
        <sequence resource="EMBL-CDS" id="BAT02600"/>
    </conflict>
</comment>
<protein>
    <recommendedName>
        <fullName evidence="5">Armadillo repeat-containing protein LFR</fullName>
    </recommendedName>
    <alternativeName>
        <fullName evidence="4">Protein LFR ortholog</fullName>
        <shortName evidence="4">OsLFR</shortName>
    </alternativeName>
</protein>
<proteinExistence type="evidence at protein level"/>
<reference key="1">
    <citation type="journal article" date="2005" name="Nature">
        <title>The map-based sequence of the rice genome.</title>
        <authorList>
            <consortium name="International rice genome sequencing project (IRGSP)"/>
        </authorList>
    </citation>
    <scope>NUCLEOTIDE SEQUENCE [LARGE SCALE GENOMIC DNA]</scope>
    <source>
        <strain>cv. Nipponbare</strain>
    </source>
</reference>
<reference key="2">
    <citation type="journal article" date="2008" name="Nucleic Acids Res.">
        <title>The rice annotation project database (RAP-DB): 2008 update.</title>
        <authorList>
            <consortium name="The rice annotation project (RAP)"/>
        </authorList>
    </citation>
    <scope>GENOME REANNOTATION</scope>
    <source>
        <strain>cv. Nipponbare</strain>
    </source>
</reference>
<reference key="3">
    <citation type="journal article" date="2013" name="Rice">
        <title>Improvement of the Oryza sativa Nipponbare reference genome using next generation sequence and optical map data.</title>
        <authorList>
            <person name="Kawahara Y."/>
            <person name="de la Bastide M."/>
            <person name="Hamilton J.P."/>
            <person name="Kanamori H."/>
            <person name="McCombie W.R."/>
            <person name="Ouyang S."/>
            <person name="Schwartz D.C."/>
            <person name="Tanaka T."/>
            <person name="Wu J."/>
            <person name="Zhou S."/>
            <person name="Childs K.L."/>
            <person name="Davidson R.M."/>
            <person name="Lin H."/>
            <person name="Quesada-Ocampo L."/>
            <person name="Vaillancourt B."/>
            <person name="Sakai H."/>
            <person name="Lee S.S."/>
            <person name="Kim J."/>
            <person name="Numa H."/>
            <person name="Itoh T."/>
            <person name="Buell C.R."/>
            <person name="Matsumoto T."/>
        </authorList>
    </citation>
    <scope>GENOME REANNOTATION</scope>
    <source>
        <strain>cv. Nipponbare</strain>
    </source>
</reference>
<reference key="4">
    <citation type="journal article" date="2020" name="Plant J.">
        <title>OsLFR is essential for early endosperm and embryo development by interacting with SWI/SNF complex members in Oryza sativa.</title>
        <authorList>
            <person name="Qi D."/>
            <person name="Wen Q."/>
            <person name="Meng Z."/>
            <person name="Yuan S."/>
            <person name="Guo H."/>
            <person name="Zhao H."/>
            <person name="Cui S."/>
        </authorList>
    </citation>
    <scope>FUNCTION</scope>
    <scope>INTERACTION WITH CHR719; SWI3A AND SWI3C</scope>
    <scope>SUBCELLULAR LOCATION</scope>
    <scope>TISSUE SPECIFICITY</scope>
    <scope>DISRUPTION PHENOTYPE</scope>
</reference>
<keyword id="KW-0217">Developmental protein</keyword>
<keyword id="KW-0341">Growth regulation</keyword>
<keyword id="KW-0539">Nucleus</keyword>
<keyword id="KW-1185">Reference proteome</keyword>
<keyword id="KW-0677">Repeat</keyword>
<name>LFR_ORYSJ</name>
<gene>
    <name evidence="4" type="primary">LFR</name>
    <name evidence="7" type="ordered locus">Os07g0609766</name>
    <name evidence="5" type="ordered locus">LOC_Os07g41900</name>
    <name evidence="6" type="ORF">OSJNBb0018L13.27</name>
</gene>
<feature type="chain" id="PRO_0000452394" description="Armadillo repeat-containing protein LFR">
    <location>
        <begin position="1"/>
        <end position="460"/>
    </location>
</feature>
<feature type="repeat" description="ARM 1" evidence="1">
    <location>
        <begin position="225"/>
        <end position="267"/>
    </location>
</feature>
<feature type="repeat" description="ARM 2" evidence="1">
    <location>
        <begin position="321"/>
        <end position="360"/>
    </location>
</feature>
<feature type="repeat" description="ARM 3" evidence="1">
    <location>
        <begin position="364"/>
        <end position="405"/>
    </location>
</feature>
<feature type="region of interest" description="Disordered" evidence="2">
    <location>
        <begin position="1"/>
        <end position="32"/>
    </location>
</feature>
<feature type="compositionally biased region" description="Low complexity" evidence="2">
    <location>
        <begin position="1"/>
        <end position="10"/>
    </location>
</feature>